<accession>Q07643</accession>
<organism>
    <name type="scientific">Mus musculus</name>
    <name type="common">Mouse</name>
    <dbReference type="NCBI Taxonomy" id="10090"/>
    <lineage>
        <taxon>Eukaryota</taxon>
        <taxon>Metazoa</taxon>
        <taxon>Chordata</taxon>
        <taxon>Craniata</taxon>
        <taxon>Vertebrata</taxon>
        <taxon>Euteleostomi</taxon>
        <taxon>Mammalia</taxon>
        <taxon>Eutheria</taxon>
        <taxon>Euarchontoglires</taxon>
        <taxon>Glires</taxon>
        <taxon>Rodentia</taxon>
        <taxon>Myomorpha</taxon>
        <taxon>Muroidea</taxon>
        <taxon>Muridae</taxon>
        <taxon>Murinae</taxon>
        <taxon>Mus</taxon>
        <taxon>Mus</taxon>
    </lineage>
</organism>
<gene>
    <name type="primary">Col9a2</name>
</gene>
<protein>
    <recommendedName>
        <fullName>Collagen alpha-2(IX) chain</fullName>
    </recommendedName>
</protein>
<evidence type="ECO:0000250" key="1"/>
<evidence type="ECO:0000250" key="2">
    <source>
        <dbReference type="UniProtKB" id="C0HLN2"/>
    </source>
</evidence>
<evidence type="ECO:0000250" key="3">
    <source>
        <dbReference type="UniProtKB" id="P12108"/>
    </source>
</evidence>
<evidence type="ECO:0000255" key="4"/>
<evidence type="ECO:0000256" key="5">
    <source>
        <dbReference type="SAM" id="MobiDB-lite"/>
    </source>
</evidence>
<evidence type="ECO:0000305" key="6"/>
<reference key="1">
    <citation type="journal article" date="1994" name="J. Biol. Chem.">
        <title>The exon structure of the mouse alpha 2(IX) collagen gene shows unexpected divergence from the chick gene.</title>
        <authorList>
            <person name="Perala M."/>
            <person name="Elima K."/>
            <person name="Metsaranta M."/>
            <person name="Rosati R."/>
            <person name="de Crombrugghe B."/>
            <person name="Vuorio E."/>
        </authorList>
    </citation>
    <scope>NUCLEOTIDE SEQUENCE [GENOMIC DNA]</scope>
    <source>
        <strain>BALB/cJ</strain>
        <tissue>Liver</tissue>
    </source>
</reference>
<reference key="2">
    <citation type="journal article" date="1992" name="Biochim. Biophys. Acta">
        <title>Specific hybridization probes for mouse alpha 2(IX) and alpha 1(X) collagen mRNAs.</title>
        <authorList>
            <person name="Elima K."/>
            <person name="Metsaeranta M."/>
            <person name="Kallio J."/>
            <person name="Peraelae M."/>
            <person name="Eerola I."/>
            <person name="Garofalo S."/>
            <person name="de Crombrugghe B."/>
            <person name="Vuorio E."/>
        </authorList>
    </citation>
    <scope>NUCLEOTIDE SEQUENCE [MRNA] OF 521-668</scope>
    <source>
        <strain>C57BL/6J</strain>
    </source>
</reference>
<keyword id="KW-0176">Collagen</keyword>
<keyword id="KW-1015">Disulfide bond</keyword>
<keyword id="KW-0272">Extracellular matrix</keyword>
<keyword id="KW-0325">Glycoprotein</keyword>
<keyword id="KW-0379">Hydroxylation</keyword>
<keyword id="KW-0654">Proteoglycan</keyword>
<keyword id="KW-1185">Reference proteome</keyword>
<keyword id="KW-0677">Repeat</keyword>
<keyword id="KW-0964">Secreted</keyword>
<keyword id="KW-0732">Signal</keyword>
<dbReference type="EMBL" id="Z22923">
    <property type="protein sequence ID" value="CAA80503.1"/>
    <property type="molecule type" value="Genomic_DNA"/>
</dbReference>
<dbReference type="EMBL" id="X63014">
    <property type="protein sequence ID" value="CAA44742.1"/>
    <property type="molecule type" value="mRNA"/>
</dbReference>
<dbReference type="CCDS" id="CCDS18599.1"/>
<dbReference type="PIR" id="A53330">
    <property type="entry name" value="A53330"/>
</dbReference>
<dbReference type="SMR" id="Q07643"/>
<dbReference type="ComplexPortal" id="CPX-2970">
    <property type="entry name" value="Collagen type IX trimer"/>
</dbReference>
<dbReference type="FunCoup" id="Q07643">
    <property type="interactions" value="34"/>
</dbReference>
<dbReference type="STRING" id="10090.ENSMUSP00000030372"/>
<dbReference type="GlyCosmos" id="Q07643">
    <property type="glycosylation" value="2 sites, No reported glycans"/>
</dbReference>
<dbReference type="GlyGen" id="Q07643">
    <property type="glycosylation" value="3 sites"/>
</dbReference>
<dbReference type="PhosphoSitePlus" id="Q07643"/>
<dbReference type="PaxDb" id="10090-ENSMUSP00000030372"/>
<dbReference type="ProteomicsDB" id="283550"/>
<dbReference type="AGR" id="MGI:88466"/>
<dbReference type="MGI" id="MGI:88466">
    <property type="gene designation" value="Col9a2"/>
</dbReference>
<dbReference type="eggNOG" id="KOG3544">
    <property type="taxonomic scope" value="Eukaryota"/>
</dbReference>
<dbReference type="InParanoid" id="Q07643"/>
<dbReference type="PhylomeDB" id="Q07643"/>
<dbReference type="Reactome" id="R-MMU-1650814">
    <property type="pathway name" value="Collagen biosynthesis and modifying enzymes"/>
</dbReference>
<dbReference type="Reactome" id="R-MMU-186797">
    <property type="pathway name" value="Signaling by PDGF"/>
</dbReference>
<dbReference type="Reactome" id="R-MMU-2022090">
    <property type="pathway name" value="Assembly of collagen fibrils and other multimeric structures"/>
</dbReference>
<dbReference type="Reactome" id="R-MMU-216083">
    <property type="pathway name" value="Integrin cell surface interactions"/>
</dbReference>
<dbReference type="Reactome" id="R-MMU-3000178">
    <property type="pathway name" value="ECM proteoglycans"/>
</dbReference>
<dbReference type="Reactome" id="R-MMU-419037">
    <property type="pathway name" value="NCAM1 interactions"/>
</dbReference>
<dbReference type="Reactome" id="R-MMU-8948216">
    <property type="pathway name" value="Collagen chain trimerization"/>
</dbReference>
<dbReference type="ChiTaRS" id="Col9a2">
    <property type="organism name" value="mouse"/>
</dbReference>
<dbReference type="PRO" id="PR:Q07643"/>
<dbReference type="Proteomes" id="UP000000589">
    <property type="component" value="Unplaced"/>
</dbReference>
<dbReference type="RNAct" id="Q07643">
    <property type="molecule type" value="protein"/>
</dbReference>
<dbReference type="GO" id="GO:0005581">
    <property type="term" value="C:collagen trimer"/>
    <property type="evidence" value="ECO:0007669"/>
    <property type="project" value="UniProtKB-KW"/>
</dbReference>
<dbReference type="GO" id="GO:0062023">
    <property type="term" value="C:collagen-containing extracellular matrix"/>
    <property type="evidence" value="ECO:0007005"/>
    <property type="project" value="BHF-UCL"/>
</dbReference>
<dbReference type="GO" id="GO:0005576">
    <property type="term" value="C:extracellular region"/>
    <property type="evidence" value="ECO:0007669"/>
    <property type="project" value="UniProtKB-KW"/>
</dbReference>
<dbReference type="InterPro" id="IPR008160">
    <property type="entry name" value="Collagen"/>
</dbReference>
<dbReference type="InterPro" id="IPR050149">
    <property type="entry name" value="Collagen_superfamily"/>
</dbReference>
<dbReference type="PANTHER" id="PTHR24023">
    <property type="entry name" value="COLLAGEN ALPHA"/>
    <property type="match status" value="1"/>
</dbReference>
<dbReference type="PANTHER" id="PTHR24023:SF906">
    <property type="entry name" value="COLLAGEN ALPHA-2(IX) CHAIN"/>
    <property type="match status" value="1"/>
</dbReference>
<dbReference type="Pfam" id="PF01391">
    <property type="entry name" value="Collagen"/>
    <property type="match status" value="7"/>
</dbReference>
<sequence length="688" mass="65321">MTAVPAPRSLFVLLQVLWLALAQIRGPPGEPGPPGPPGPPGVPGSDGIDGDKGPPGKVGPPGSKGEPGKPGPDGPDGKPGIDGLMGAKGEPGPVGTPGVKGQPGLPGPPGLPGPGFAGPPGPPGPVGLPGEIGTPGPKGDPGPEGPSGPPGPPGKPGRPGTIQGLEGSADFLCPTNCPAGVKGPQGLQGVKGHPGKRGILGDPGRQGKPGPKGDVGASGEQGIPGPPGPQGIRGYPGMAGPKGEMGPRGYKGMVGSIGAAGPPGEEGPRGPPGEAGEKGDVGSQGARGPQGITGPKGITGPPGIDGKDGTPGIPGMKGSAGQVGRPGSPGHQGLAGVPGQPGTKGGPGDKGEPGQQGLPGVSGPPGKEGEPGPRGEIGPQGIMGQKGDQGERGPVGQPGPQGRQGPKGEQGPPGIPGPQGLPGIKGDKGSPGKTGPRGGVGDPGVAGLPGEKGEKGQSGEPGLKGQQGVRGETGYPGPSGDIGAPGVQGYPGLPGPRGLVGDRGVPGQPGRQGVVGRAASDQHIVDVVLKMIQEQLAEVAVSAKREALGAAGMVGLPGPPGPPGYPGKQGPNGHPGPRGIPGIVGAVGQIGNTGPKGKRGEKGDRGEMGHGHPGMPGPPGIPGLPGRPGQAINGKDGDRGSPGAPGEAGRPGRPGPVGLPGFCEPAACLGASAYTSARLTEPGSIKGP</sequence>
<proteinExistence type="evidence at transcript level"/>
<comment type="function">
    <text>Structural component of hyaline cartilage and vitreous of the eye.</text>
</comment>
<comment type="subunit">
    <text evidence="2">Heterotrimer of an alpha 1(IX), an alpha 2(IX) and an alpha 3(IX) chain (By similarity). The chains are linked to each other by interchain disulfide bonds (By similarity). Trimers are also cross-linked via hydroxylysines (By similarity).</text>
</comment>
<comment type="subcellular location">
    <subcellularLocation>
        <location evidence="1">Secreted</location>
        <location evidence="1">Extracellular space</location>
        <location evidence="1">Extracellular matrix</location>
    </subcellularLocation>
</comment>
<comment type="PTM">
    <text>Covalently linked to the telopeptides of type II collagen by lysine-derived cross-links.</text>
</comment>
<comment type="PTM">
    <text>Prolines at the third position of the tripeptide repeating unit (G-X-Y) are hydroxylated in some or all of the chains.</text>
</comment>
<comment type="similarity">
    <text evidence="6">Belongs to the fibril-associated collagens with interrupted helices (FACIT) family.</text>
</comment>
<feature type="signal peptide" evidence="4">
    <location>
        <begin position="1"/>
        <end position="22"/>
    </location>
</feature>
<feature type="chain" id="PRO_0000005838" description="Collagen alpha-2(IX) chain">
    <location>
        <begin position="23"/>
        <end position="688"/>
    </location>
</feature>
<feature type="region of interest" description="Disordered" evidence="5">
    <location>
        <begin position="26"/>
        <end position="171"/>
    </location>
</feature>
<feature type="region of interest" description="Triple-helical region 4 (COL4)">
    <location>
        <begin position="26"/>
        <end position="162"/>
    </location>
</feature>
<feature type="region of interest" description="Nonhelical region 4 (NC4)">
    <location>
        <begin position="163"/>
        <end position="179"/>
    </location>
</feature>
<feature type="region of interest" description="Triple-helical region 3 (COL3)">
    <location>
        <begin position="180"/>
        <end position="518"/>
    </location>
</feature>
<feature type="region of interest" description="Disordered" evidence="5">
    <location>
        <begin position="183"/>
        <end position="517"/>
    </location>
</feature>
<feature type="region of interest" description="Nonhelical region 3 (NC3)">
    <location>
        <begin position="519"/>
        <end position="548"/>
    </location>
</feature>
<feature type="region of interest" description="Triple-helical region 2 (COL2)">
    <location>
        <begin position="549"/>
        <end position="631"/>
    </location>
</feature>
<feature type="region of interest" description="Disordered" evidence="5">
    <location>
        <begin position="553"/>
        <end position="664"/>
    </location>
</feature>
<feature type="region of interest" description="Nonhelical region 2 (NC2)">
    <location>
        <begin position="632"/>
        <end position="633"/>
    </location>
</feature>
<feature type="region of interest" description="Triple-helical region 1 (COL1)">
    <location>
        <begin position="634"/>
        <end position="663"/>
    </location>
</feature>
<feature type="region of interest" description="Nonhelical region 1 (NC1)">
    <location>
        <begin position="664"/>
        <end position="688"/>
    </location>
</feature>
<feature type="compositionally biased region" description="Pro residues" evidence="5">
    <location>
        <begin position="28"/>
        <end position="42"/>
    </location>
</feature>
<feature type="compositionally biased region" description="Pro residues" evidence="5">
    <location>
        <begin position="105"/>
        <end position="126"/>
    </location>
</feature>
<feature type="compositionally biased region" description="Low complexity" evidence="5">
    <location>
        <begin position="128"/>
        <end position="137"/>
    </location>
</feature>
<feature type="compositionally biased region" description="Pro residues" evidence="5">
    <location>
        <begin position="138"/>
        <end position="156"/>
    </location>
</feature>
<feature type="compositionally biased region" description="Low complexity" evidence="5">
    <location>
        <begin position="289"/>
        <end position="314"/>
    </location>
</feature>
<feature type="compositionally biased region" description="Low complexity" evidence="5">
    <location>
        <begin position="392"/>
        <end position="412"/>
    </location>
</feature>
<feature type="compositionally biased region" description="Gly residues" evidence="5">
    <location>
        <begin position="435"/>
        <end position="444"/>
    </location>
</feature>
<feature type="compositionally biased region" description="Low complexity" evidence="5">
    <location>
        <begin position="502"/>
        <end position="517"/>
    </location>
</feature>
<feature type="compositionally biased region" description="Basic and acidic residues" evidence="5">
    <location>
        <begin position="598"/>
        <end position="610"/>
    </location>
</feature>
<feature type="modified residue" description="4-hydroxyproline" evidence="3">
    <location>
        <position position="159"/>
    </location>
</feature>
<feature type="modified residue" description="5-hydroxylysine" evidence="3">
    <location>
        <position position="182"/>
    </location>
</feature>
<feature type="glycosylation site" description="O-linked (Xyl...) (glycosaminoglycan) serine" evidence="3">
    <location>
        <position position="168"/>
    </location>
</feature>
<feature type="glycosylation site" description="O-linked (Gal...) hydroxylysine" evidence="3">
    <location>
        <position position="182"/>
    </location>
</feature>
<feature type="disulfide bond" description="Interchain" evidence="4">
    <location>
        <position position="173"/>
    </location>
</feature>
<feature type="disulfide bond" description="Interchain" evidence="4">
    <location>
        <position position="177"/>
    </location>
</feature>
<feature type="sequence variant" description="In strain: C57BL/6.">
    <original>V</original>
    <variation>M</variation>
    <location>
        <position position="525"/>
    </location>
</feature>
<feature type="sequence variant" description="In strain: C57BL/6.">
    <original>H</original>
    <variation>R</variation>
    <location>
        <position position="610"/>
    </location>
</feature>
<feature type="sequence variant" description="In strain: C57BL/6.">
    <original>A</original>
    <variation>G</variation>
    <location>
        <position position="666"/>
    </location>
</feature>
<name>CO9A2_MOUSE</name>